<keyword id="KW-0150">Chloroplast</keyword>
<keyword id="KW-0456">Lyase</keyword>
<keyword id="KW-0460">Magnesium</keyword>
<keyword id="KW-0479">Metal-binding</keyword>
<keyword id="KW-0934">Plastid</keyword>
<keyword id="KW-1185">Reference proteome</keyword>
<keyword id="KW-0809">Transit peptide</keyword>
<protein>
    <recommendedName>
        <fullName evidence="7">Linalool synthase TPS2, chloroplastic</fullName>
        <ecNumber evidence="6">4.2.3.-</ecNumber>
    </recommendedName>
    <alternativeName>
        <fullName evidence="7">Cis-ocimene synthase TPS2, chloroplastic</fullName>
        <ecNumber evidence="6">4.2.3.-</ecNumber>
    </alternativeName>
    <alternativeName>
        <fullName evidence="7">Myrcene synthase TPS2, chloroplastic</fullName>
        <ecNumber evidence="6">4.2.3.15</ecNumber>
    </alternativeName>
    <alternativeName>
        <fullName evidence="7">Trans-ocimene synthase TPS2, chloroplastic</fullName>
        <ecNumber evidence="6">4.2.3.106</ecNumber>
    </alternativeName>
</protein>
<dbReference type="EC" id="4.2.3.-" evidence="6"/>
<dbReference type="EC" id="4.2.3.15" evidence="6"/>
<dbReference type="EC" id="4.2.3.106" evidence="6"/>
<dbReference type="EMBL" id="HE985293">
    <property type="protein sequence ID" value="CCM43928.1"/>
    <property type="status" value="ALT_INIT"/>
    <property type="molecule type" value="mRNA"/>
</dbReference>
<dbReference type="SMR" id="R4YXW8"/>
<dbReference type="UniPathway" id="UPA00213"/>
<dbReference type="Proteomes" id="UP000515148">
    <property type="component" value="Unplaced"/>
</dbReference>
<dbReference type="GO" id="GO:0009507">
    <property type="term" value="C:chloroplast"/>
    <property type="evidence" value="ECO:0007669"/>
    <property type="project" value="UniProtKB-SubCell"/>
</dbReference>
<dbReference type="GO" id="GO:0000287">
    <property type="term" value="F:magnesium ion binding"/>
    <property type="evidence" value="ECO:0007669"/>
    <property type="project" value="InterPro"/>
</dbReference>
<dbReference type="GO" id="GO:0050551">
    <property type="term" value="F:myrcene synthase activity"/>
    <property type="evidence" value="ECO:0000314"/>
    <property type="project" value="UniProtKB"/>
</dbReference>
<dbReference type="GO" id="GO:0016102">
    <property type="term" value="P:diterpenoid biosynthetic process"/>
    <property type="evidence" value="ECO:0007669"/>
    <property type="project" value="InterPro"/>
</dbReference>
<dbReference type="GO" id="GO:0016098">
    <property type="term" value="P:monoterpenoid metabolic process"/>
    <property type="evidence" value="ECO:0000314"/>
    <property type="project" value="UniProtKB"/>
</dbReference>
<dbReference type="CDD" id="cd00684">
    <property type="entry name" value="Terpene_cyclase_plant_C1"/>
    <property type="match status" value="1"/>
</dbReference>
<dbReference type="FunFam" id="1.10.600.10:FF:000007">
    <property type="entry name" value="Isoprene synthase, chloroplastic"/>
    <property type="match status" value="1"/>
</dbReference>
<dbReference type="FunFam" id="1.50.10.130:FF:000001">
    <property type="entry name" value="Isoprene synthase, chloroplastic"/>
    <property type="match status" value="1"/>
</dbReference>
<dbReference type="Gene3D" id="1.10.600.10">
    <property type="entry name" value="Farnesyl Diphosphate Synthase"/>
    <property type="match status" value="1"/>
</dbReference>
<dbReference type="Gene3D" id="1.50.10.130">
    <property type="entry name" value="Terpene synthase, N-terminal domain"/>
    <property type="match status" value="1"/>
</dbReference>
<dbReference type="InterPro" id="IPR008949">
    <property type="entry name" value="Isoprenoid_synthase_dom_sf"/>
</dbReference>
<dbReference type="InterPro" id="IPR034741">
    <property type="entry name" value="Terpene_cyclase-like_1_C"/>
</dbReference>
<dbReference type="InterPro" id="IPR044814">
    <property type="entry name" value="Terpene_cyclase_plant_C1"/>
</dbReference>
<dbReference type="InterPro" id="IPR001906">
    <property type="entry name" value="Terpene_synth_N"/>
</dbReference>
<dbReference type="InterPro" id="IPR036965">
    <property type="entry name" value="Terpene_synth_N_sf"/>
</dbReference>
<dbReference type="InterPro" id="IPR050148">
    <property type="entry name" value="Terpene_synthase-like"/>
</dbReference>
<dbReference type="InterPro" id="IPR005630">
    <property type="entry name" value="Terpene_synthase_metal-bd"/>
</dbReference>
<dbReference type="InterPro" id="IPR008930">
    <property type="entry name" value="Terpenoid_cyclase/PrenylTrfase"/>
</dbReference>
<dbReference type="PANTHER" id="PTHR31225">
    <property type="entry name" value="OS04G0344100 PROTEIN-RELATED"/>
    <property type="match status" value="1"/>
</dbReference>
<dbReference type="PANTHER" id="PTHR31225:SF9">
    <property type="entry name" value="TERPENE SYNTHASE 10"/>
    <property type="match status" value="1"/>
</dbReference>
<dbReference type="Pfam" id="PF01397">
    <property type="entry name" value="Terpene_synth"/>
    <property type="match status" value="1"/>
</dbReference>
<dbReference type="Pfam" id="PF03936">
    <property type="entry name" value="Terpene_synth_C"/>
    <property type="match status" value="1"/>
</dbReference>
<dbReference type="SFLD" id="SFLDS00005">
    <property type="entry name" value="Isoprenoid_Synthase_Type_I"/>
    <property type="match status" value="1"/>
</dbReference>
<dbReference type="SFLD" id="SFLDG01019">
    <property type="entry name" value="Terpene_Cyclase_Like_1_C_Termi"/>
    <property type="match status" value="1"/>
</dbReference>
<dbReference type="SUPFAM" id="SSF48239">
    <property type="entry name" value="Terpenoid cyclases/Protein prenyltransferases"/>
    <property type="match status" value="1"/>
</dbReference>
<dbReference type="SUPFAM" id="SSF48576">
    <property type="entry name" value="Terpenoid synthases"/>
    <property type="match status" value="1"/>
</dbReference>
<evidence type="ECO:0000250" key="1">
    <source>
        <dbReference type="UniProtKB" id="A0A1C9J6A7"/>
    </source>
</evidence>
<evidence type="ECO:0000250" key="2">
    <source>
        <dbReference type="UniProtKB" id="Q40577"/>
    </source>
</evidence>
<evidence type="ECO:0000250" key="3">
    <source>
        <dbReference type="UniProtKB" id="Q6JD73"/>
    </source>
</evidence>
<evidence type="ECO:0000255" key="4"/>
<evidence type="ECO:0000256" key="5">
    <source>
        <dbReference type="SAM" id="MobiDB-lite"/>
    </source>
</evidence>
<evidence type="ECO:0000269" key="6">
    <source>
    </source>
</evidence>
<evidence type="ECO:0000303" key="7">
    <source>
    </source>
</evidence>
<evidence type="ECO:0000305" key="8"/>
<organism>
    <name type="scientific">Coffea arabica</name>
    <name type="common">Arabian coffee</name>
    <dbReference type="NCBI Taxonomy" id="13443"/>
    <lineage>
        <taxon>Eukaryota</taxon>
        <taxon>Viridiplantae</taxon>
        <taxon>Streptophyta</taxon>
        <taxon>Embryophyta</taxon>
        <taxon>Tracheophyta</taxon>
        <taxon>Spermatophyta</taxon>
        <taxon>Magnoliopsida</taxon>
        <taxon>eudicotyledons</taxon>
        <taxon>Gunneridae</taxon>
        <taxon>Pentapetalae</taxon>
        <taxon>asterids</taxon>
        <taxon>lamiids</taxon>
        <taxon>Gentianales</taxon>
        <taxon>Rubiaceae</taxon>
        <taxon>Ixoroideae</taxon>
        <taxon>Gardenieae complex</taxon>
        <taxon>Bertiereae - Coffeeae clade</taxon>
        <taxon>Coffeeae</taxon>
        <taxon>Coffea</taxon>
    </lineage>
</organism>
<gene>
    <name evidence="7" type="primary">TPS2</name>
    <name type="ORF">LOC113711778</name>
</gene>
<proteinExistence type="evidence at protein level"/>
<sequence>EVEEPKTKISASTAEASSSRISSAKMTADGTIKLGDQSPLKQSEKDHPVSWDFKLVQSLRNEYADERYISRSAMLDQEMNVVNLLELIDNLQRLGLSYHFEDKIRSILSGIYNTIKMRNPEGLYATALEFRLRRQHGFYVPQEIFESFKDENGDFNHSLCEDLKGLLYLYEASYLEKENESNLEMAREFTAKHLKKILKEKRIDQELEALVQHALELPLHWRMMRLEARWFIDIYEARSDRNPILLELAKLDFNIVQAIHQNDLECTLRWWSSTGLAEKLSFARDIMVENFFWTVGTISDPQHGNARRLLTKVAALVTAIDDVYDQYGTEDELELFTSVVERWDVNSIDQLPDYMKICFLALFNFVNEMAYDALKEEGVNIIPYLRKAWADLCKAYLQEAKWFFSGHIPTLQQYLNNAWTSISAPLVVVHAYFCVDYPINKDHVEYLEKCHKIIRCSSMIIRLANDLGTSPESEVLKSADVPKSIQCYVKETGACEEKAREYLRFLIIEAWKQMNEAQTVDSPFSSTFKGFAVNVARMGQCMYQHGDGHAHQNSEPRDRILSLLFEPISSFA</sequence>
<name>TPS2_COFAR</name>
<accession>R4YXW8</accession>
<comment type="function">
    <text evidence="6">Monoterpene synthase (mono-TPS) involved in the biosynthesis of monoterpenes natural products, constituent of coffee beverage aroma (PubMed:23398891). Catalyzes the conversion of (2E)-geranyl diphosphate (GPP) into linalool and beta-myrcene, and, as minor products, cis-ocimene and trans-ocimene (PubMed:23398891). Not able to use geranylgeranyl pyrophosphate (GGPP) and farnesyl pyrophosphate (FPP) as substrates (PubMed:23398891).</text>
</comment>
<comment type="catalytic activity">
    <reaction evidence="6">
        <text>(2E)-geranyl diphosphate = beta-myrcene + diphosphate</text>
        <dbReference type="Rhea" id="RHEA:16965"/>
        <dbReference type="ChEBI" id="CHEBI:17221"/>
        <dbReference type="ChEBI" id="CHEBI:33019"/>
        <dbReference type="ChEBI" id="CHEBI:58057"/>
        <dbReference type="EC" id="4.2.3.15"/>
    </reaction>
    <physiologicalReaction direction="left-to-right" evidence="6">
        <dbReference type="Rhea" id="RHEA:16966"/>
    </physiologicalReaction>
</comment>
<comment type="catalytic activity">
    <reaction evidence="6">
        <text>(2E)-geranyl diphosphate + H2O = linalool + diphosphate</text>
        <dbReference type="Rhea" id="RHEA:68708"/>
        <dbReference type="ChEBI" id="CHEBI:15377"/>
        <dbReference type="ChEBI" id="CHEBI:17580"/>
        <dbReference type="ChEBI" id="CHEBI:33019"/>
        <dbReference type="ChEBI" id="CHEBI:58057"/>
    </reaction>
    <physiologicalReaction direction="left-to-right" evidence="6">
        <dbReference type="Rhea" id="RHEA:68709"/>
    </physiologicalReaction>
</comment>
<comment type="catalytic activity">
    <reaction evidence="6">
        <text>(2E)-geranyl diphosphate = (Z)-beta-ocimene + diphosphate</text>
        <dbReference type="Rhea" id="RHEA:68824"/>
        <dbReference type="ChEBI" id="CHEBI:33019"/>
        <dbReference type="ChEBI" id="CHEBI:58057"/>
        <dbReference type="ChEBI" id="CHEBI:87574"/>
    </reaction>
    <physiologicalReaction direction="left-to-right" evidence="6">
        <dbReference type="Rhea" id="RHEA:68825"/>
    </physiologicalReaction>
</comment>
<comment type="catalytic activity">
    <reaction evidence="6">
        <text>(2E)-geranyl diphosphate = (E)-beta-ocimene + diphosphate</text>
        <dbReference type="Rhea" id="RHEA:32691"/>
        <dbReference type="ChEBI" id="CHEBI:33019"/>
        <dbReference type="ChEBI" id="CHEBI:58057"/>
        <dbReference type="ChEBI" id="CHEBI:64280"/>
        <dbReference type="EC" id="4.2.3.106"/>
    </reaction>
    <physiologicalReaction direction="left-to-right" evidence="6">
        <dbReference type="Rhea" id="RHEA:32692"/>
    </physiologicalReaction>
</comment>
<comment type="cofactor">
    <cofactor evidence="1">
        <name>Mg(2+)</name>
        <dbReference type="ChEBI" id="CHEBI:18420"/>
    </cofactor>
    <cofactor evidence="1">
        <name>Mn(2+)</name>
        <dbReference type="ChEBI" id="CHEBI:29035"/>
    </cofactor>
    <text evidence="1">Binds 3 Mg(2+) or Mn(2+) ions per subunit.</text>
</comment>
<comment type="pathway">
    <text evidence="6">Secondary metabolite biosynthesis; terpenoid biosynthesis.</text>
</comment>
<comment type="subunit">
    <text evidence="3">Monomer.</text>
</comment>
<comment type="subcellular location">
    <subcellularLocation>
        <location evidence="4">Plastid</location>
        <location evidence="4">Chloroplast</location>
    </subcellularLocation>
</comment>
<comment type="tissue specificity">
    <text evidence="6">Expressed in flowers and fruits.</text>
</comment>
<comment type="developmental stage">
    <text evidence="6">Observed at early stages of flowers and fruits development (PubMed:23398891). Expressed in flowers and drupes at 10 weeks after pollination, and, at low levels, in fruits at 15 weeks of ripening (PubMed:23398891).</text>
</comment>
<comment type="domain">
    <text evidence="8">The Asp-Asp-Xaa-Xaa-Asp/Glu (DDXXD/E) motif is important for the catalytic activity, presumably through binding to Mg(2+).</text>
</comment>
<comment type="similarity">
    <text evidence="8">Belongs to the terpene synthase family. Tpsb subfamily.</text>
</comment>
<comment type="sequence caution" evidence="8">
    <conflict type="erroneous initiation">
        <sequence resource="EMBL-CDS" id="CCM43928"/>
    </conflict>
    <text>Truncated N-terminus.</text>
</comment>
<feature type="transit peptide" description="Chloroplast" evidence="4">
    <location>
        <begin position="1"/>
        <end position="27"/>
    </location>
</feature>
<feature type="chain" id="PRO_0000455259" description="Linalool synthase TPS2, chloroplastic">
    <location>
        <begin position="28"/>
        <end position="572"/>
    </location>
</feature>
<feature type="region of interest" description="Disordered" evidence="5">
    <location>
        <begin position="1"/>
        <end position="45"/>
    </location>
</feature>
<feature type="short sequence motif" description="DDXXD motif" evidence="8">
    <location>
        <begin position="321"/>
        <end position="325"/>
    </location>
</feature>
<feature type="compositionally biased region" description="Low complexity" evidence="5">
    <location>
        <begin position="8"/>
        <end position="28"/>
    </location>
</feature>
<feature type="binding site" evidence="2">
    <location>
        <position position="284"/>
    </location>
    <ligand>
        <name>(2E)-geranyl diphosphate</name>
        <dbReference type="ChEBI" id="CHEBI:58057"/>
    </ligand>
</feature>
<feature type="binding site" evidence="2">
    <location>
        <position position="321"/>
    </location>
    <ligand>
        <name>(2E)-geranyl diphosphate</name>
        <dbReference type="ChEBI" id="CHEBI:58057"/>
    </ligand>
</feature>
<feature type="binding site" evidence="2">
    <location>
        <position position="321"/>
    </location>
    <ligand>
        <name>Mg(2+)</name>
        <dbReference type="ChEBI" id="CHEBI:18420"/>
        <label>1</label>
    </ligand>
</feature>
<feature type="binding site" evidence="2">
    <location>
        <position position="321"/>
    </location>
    <ligand>
        <name>Mg(2+)</name>
        <dbReference type="ChEBI" id="CHEBI:18420"/>
        <label>2</label>
    </ligand>
</feature>
<feature type="binding site" evidence="2">
    <location>
        <position position="325"/>
    </location>
    <ligand>
        <name>(2E)-geranyl diphosphate</name>
        <dbReference type="ChEBI" id="CHEBI:58057"/>
    </ligand>
</feature>
<feature type="binding site" evidence="2">
    <location>
        <position position="325"/>
    </location>
    <ligand>
        <name>Mg(2+)</name>
        <dbReference type="ChEBI" id="CHEBI:18420"/>
        <label>1</label>
    </ligand>
</feature>
<feature type="binding site" evidence="2">
    <location>
        <position position="325"/>
    </location>
    <ligand>
        <name>Mg(2+)</name>
        <dbReference type="ChEBI" id="CHEBI:18420"/>
        <label>2</label>
    </ligand>
</feature>
<feature type="binding site" evidence="2">
    <location>
        <position position="462"/>
    </location>
    <ligand>
        <name>(2E)-geranyl diphosphate</name>
        <dbReference type="ChEBI" id="CHEBI:58057"/>
    </ligand>
</feature>
<feature type="binding site" evidence="2">
    <location>
        <position position="465"/>
    </location>
    <ligand>
        <name>(2E)-geranyl diphosphate</name>
        <dbReference type="ChEBI" id="CHEBI:58057"/>
    </ligand>
</feature>
<feature type="binding site" evidence="2">
    <location>
        <position position="465"/>
    </location>
    <ligand>
        <name>Mg(2+)</name>
        <dbReference type="ChEBI" id="CHEBI:18420"/>
        <label>3</label>
    </ligand>
</feature>
<feature type="binding site" evidence="2">
    <location>
        <position position="469"/>
    </location>
    <ligand>
        <name>Mg(2+)</name>
        <dbReference type="ChEBI" id="CHEBI:18420"/>
        <label>3</label>
    </ligand>
</feature>
<feature type="binding site" evidence="2">
    <location>
        <position position="473"/>
    </location>
    <ligand>
        <name>Mg(2+)</name>
        <dbReference type="ChEBI" id="CHEBI:18420"/>
        <label>3</label>
    </ligand>
</feature>
<reference key="1">
    <citation type="journal article" date="2013" name="Phytochemistry">
        <title>Functional characterization of three Coffea arabica L. monoterpene synthases: insights into the enzymatic machinery of coffee aroma.</title>
        <authorList>
            <person name="Del Terra L."/>
            <person name="Lonzarich V."/>
            <person name="Asquini E."/>
            <person name="Navarini L."/>
            <person name="Graziosi G."/>
            <person name="Suggi Liverani F."/>
            <person name="Pallavicini A."/>
        </authorList>
    </citation>
    <scope>NUCLEOTIDE SEQUENCE [MRNA]</scope>
    <scope>FUNCTION</scope>
    <scope>CATALYTIC ACTIVITY</scope>
    <scope>PATHWAY</scope>
    <scope>TISSUE SPECIFICITY</scope>
    <scope>DEVELOPMENTAL STAGE</scope>
    <source>
        <strain>cv. Catuai Red</strain>
        <tissue>Flower</tissue>
        <tissue>Fruit</tissue>
        <tissue>Seed</tissue>
    </source>
</reference>
<reference key="2">
    <citation type="submission" date="2018-10" db="EMBL/GenBank/DDBJ databases">
        <title>The Coffea arabica cultivar Caturra genome provides a strong foundation for breeding and functional genomics studies in coffee.</title>
        <authorList>
            <person name="Zimin A.V."/>
            <person name="Yepes M."/>
            <person name="Maldonado C.E."/>
            <person name="Navarro L."/>
            <person name="Kovaka S."/>
            <person name="Pertea M."/>
            <person name="Gaitan A."/>
            <person name="Aldwinckle H."/>
        </authorList>
    </citation>
    <scope>NUCLEOTIDE SEQUENCE [LARGE SCALE GENOMIC DNA]</scope>
    <source>
        <strain>cv. Caturra red</strain>
    </source>
</reference>